<gene>
    <name evidence="1" type="primary">yaaI</name>
    <name type="ordered locus">b0013</name>
    <name type="ordered locus">JW0012</name>
</gene>
<feature type="signal peptide" evidence="1">
    <location>
        <begin position="1"/>
        <end position="23"/>
    </location>
</feature>
<feature type="chain" id="PRO_0000013778" description="UPF0412 protein YaaI">
    <location>
        <begin position="24"/>
        <end position="134"/>
    </location>
</feature>
<comment type="similarity">
    <text evidence="1">Belongs to the UPF0412 family.</text>
</comment>
<keyword id="KW-1185">Reference proteome</keyword>
<keyword id="KW-0732">Signal</keyword>
<organism>
    <name type="scientific">Escherichia coli (strain K12)</name>
    <dbReference type="NCBI Taxonomy" id="83333"/>
    <lineage>
        <taxon>Bacteria</taxon>
        <taxon>Pseudomonadati</taxon>
        <taxon>Pseudomonadota</taxon>
        <taxon>Gammaproteobacteria</taxon>
        <taxon>Enterobacterales</taxon>
        <taxon>Enterobacteriaceae</taxon>
        <taxon>Escherichia</taxon>
    </lineage>
</organism>
<dbReference type="EMBL" id="X67700">
    <property type="protein sequence ID" value="CAA47933.1"/>
    <property type="molecule type" value="Genomic_DNA"/>
</dbReference>
<dbReference type="EMBL" id="U00096">
    <property type="protein sequence ID" value="AAC73124.1"/>
    <property type="molecule type" value="Genomic_DNA"/>
</dbReference>
<dbReference type="EMBL" id="AP009048">
    <property type="protein sequence ID" value="BAE76029.1"/>
    <property type="molecule type" value="Genomic_DNA"/>
</dbReference>
<dbReference type="PIR" id="C56688">
    <property type="entry name" value="C56688"/>
</dbReference>
<dbReference type="RefSeq" id="NP_414554.1">
    <property type="nucleotide sequence ID" value="NC_000913.3"/>
</dbReference>
<dbReference type="RefSeq" id="WP_000843565.1">
    <property type="nucleotide sequence ID" value="NZ_LN832404.1"/>
</dbReference>
<dbReference type="BioGRID" id="4259519">
    <property type="interactions" value="7"/>
</dbReference>
<dbReference type="FunCoup" id="P28696">
    <property type="interactions" value="7"/>
</dbReference>
<dbReference type="IntAct" id="P28696">
    <property type="interactions" value="1"/>
</dbReference>
<dbReference type="STRING" id="511145.b0013"/>
<dbReference type="PaxDb" id="511145-b0013"/>
<dbReference type="EnsemblBacteria" id="AAC73124">
    <property type="protein sequence ID" value="AAC73124"/>
    <property type="gene ID" value="b0013"/>
</dbReference>
<dbReference type="GeneID" id="944751"/>
<dbReference type="KEGG" id="ecj:JW0012"/>
<dbReference type="KEGG" id="eco:b0013"/>
<dbReference type="KEGG" id="ecoc:C3026_00065"/>
<dbReference type="PATRIC" id="fig|511145.12.peg.11"/>
<dbReference type="EchoBASE" id="EB1475"/>
<dbReference type="eggNOG" id="ENOG502ZXCI">
    <property type="taxonomic scope" value="Bacteria"/>
</dbReference>
<dbReference type="HOGENOM" id="CLU_158661_0_0_6"/>
<dbReference type="InParanoid" id="P28696"/>
<dbReference type="OMA" id="CVKKIAF"/>
<dbReference type="OrthoDB" id="6586621at2"/>
<dbReference type="PhylomeDB" id="P28696"/>
<dbReference type="BioCyc" id="EcoCyc:G8202-MONOMER"/>
<dbReference type="PRO" id="PR:P28696"/>
<dbReference type="Proteomes" id="UP000000625">
    <property type="component" value="Chromosome"/>
</dbReference>
<dbReference type="HAMAP" id="MF_01372">
    <property type="entry name" value="UPF0412"/>
    <property type="match status" value="1"/>
</dbReference>
<dbReference type="InterPro" id="IPR020240">
    <property type="entry name" value="UPF0412_YaaI"/>
</dbReference>
<dbReference type="NCBIfam" id="NF007541">
    <property type="entry name" value="PRK10154.1"/>
    <property type="match status" value="1"/>
</dbReference>
<dbReference type="Pfam" id="PF10807">
    <property type="entry name" value="DUF2541"/>
    <property type="match status" value="1"/>
</dbReference>
<accession>P28696</accession>
<accession>Q2MCH7</accession>
<protein>
    <recommendedName>
        <fullName evidence="1">UPF0412 protein YaaI</fullName>
    </recommendedName>
</protein>
<reference key="1">
    <citation type="journal article" date="1993" name="DNA Seq.">
        <title>Five open reading frames upstream of the dnaK gene of E. coli.</title>
        <authorList>
            <person name="James R."/>
            <person name="Dean D.O."/>
            <person name="Debbage J."/>
        </authorList>
    </citation>
    <scope>NUCLEOTIDE SEQUENCE [GENOMIC DNA]</scope>
</reference>
<reference key="2">
    <citation type="journal article" date="1992" name="Nucleic Acids Res.">
        <title>Systematic sequencing of the Escherichia coli genome: analysis of the 0-2.4 min region.</title>
        <authorList>
            <person name="Yura T."/>
            <person name="Mori H."/>
            <person name="Nagai H."/>
            <person name="Nagata T."/>
            <person name="Ishihama A."/>
            <person name="Fujita N."/>
            <person name="Isono K."/>
            <person name="Mizobuchi K."/>
            <person name="Nakata A."/>
        </authorList>
    </citation>
    <scope>NUCLEOTIDE SEQUENCE [LARGE SCALE GENOMIC DNA]</scope>
    <source>
        <strain>K12</strain>
    </source>
</reference>
<reference key="3">
    <citation type="journal article" date="1997" name="Science">
        <title>The complete genome sequence of Escherichia coli K-12.</title>
        <authorList>
            <person name="Blattner F.R."/>
            <person name="Plunkett G. III"/>
            <person name="Bloch C.A."/>
            <person name="Perna N.T."/>
            <person name="Burland V."/>
            <person name="Riley M."/>
            <person name="Collado-Vides J."/>
            <person name="Glasner J.D."/>
            <person name="Rode C.K."/>
            <person name="Mayhew G.F."/>
            <person name="Gregor J."/>
            <person name="Davis N.W."/>
            <person name="Kirkpatrick H.A."/>
            <person name="Goeden M.A."/>
            <person name="Rose D.J."/>
            <person name="Mau B."/>
            <person name="Shao Y."/>
        </authorList>
    </citation>
    <scope>NUCLEOTIDE SEQUENCE [LARGE SCALE GENOMIC DNA]</scope>
    <source>
        <strain>K12 / MG1655 / ATCC 47076</strain>
    </source>
</reference>
<reference key="4">
    <citation type="journal article" date="2006" name="Mol. Syst. Biol.">
        <title>Highly accurate genome sequences of Escherichia coli K-12 strains MG1655 and W3110.</title>
        <authorList>
            <person name="Hayashi K."/>
            <person name="Morooka N."/>
            <person name="Yamamoto Y."/>
            <person name="Fujita K."/>
            <person name="Isono K."/>
            <person name="Choi S."/>
            <person name="Ohtsubo E."/>
            <person name="Baba T."/>
            <person name="Wanner B.L."/>
            <person name="Mori H."/>
            <person name="Horiuchi T."/>
        </authorList>
    </citation>
    <scope>NUCLEOTIDE SEQUENCE [LARGE SCALE GENOMIC DNA]</scope>
    <source>
        <strain>K12 / W3110 / ATCC 27325 / DSM 5911</strain>
    </source>
</reference>
<sequence>MKSVFTISASLAISLMLCCTAQANDHKLLGAIAMPRNETNDLALKLPVCRIVKRIQLSADHGDLQLSGASVYFKAARSASQSLNIPSEIKEGQTTDWININSDNDNKRCVSKITFSGHTVNSSDMATLKIIGDD</sequence>
<name>YAAI_ECOLI</name>
<evidence type="ECO:0000255" key="1">
    <source>
        <dbReference type="HAMAP-Rule" id="MF_01372"/>
    </source>
</evidence>
<proteinExistence type="inferred from homology"/>